<protein>
    <recommendedName>
        <fullName evidence="1">Large ribosomal subunit protein bL32</fullName>
    </recommendedName>
    <alternativeName>
        <fullName evidence="2">50S ribosomal protein L32</fullName>
    </alternativeName>
</protein>
<keyword id="KW-0687">Ribonucleoprotein</keyword>
<keyword id="KW-0689">Ribosomal protein</keyword>
<dbReference type="EMBL" id="CP000239">
    <property type="protein sequence ID" value="ABC99323.1"/>
    <property type="molecule type" value="Genomic_DNA"/>
</dbReference>
<dbReference type="RefSeq" id="WP_011430004.1">
    <property type="nucleotide sequence ID" value="NC_007775.1"/>
</dbReference>
<dbReference type="SMR" id="Q2JVC0"/>
<dbReference type="STRING" id="321327.CYA_1135"/>
<dbReference type="KEGG" id="cya:CYA_1135"/>
<dbReference type="eggNOG" id="COG0333">
    <property type="taxonomic scope" value="Bacteria"/>
</dbReference>
<dbReference type="HOGENOM" id="CLU_199882_0_0_3"/>
<dbReference type="OrthoDB" id="541730at2"/>
<dbReference type="Proteomes" id="UP000008818">
    <property type="component" value="Chromosome"/>
</dbReference>
<dbReference type="GO" id="GO:0015934">
    <property type="term" value="C:large ribosomal subunit"/>
    <property type="evidence" value="ECO:0007669"/>
    <property type="project" value="InterPro"/>
</dbReference>
<dbReference type="GO" id="GO:0003735">
    <property type="term" value="F:structural constituent of ribosome"/>
    <property type="evidence" value="ECO:0007669"/>
    <property type="project" value="InterPro"/>
</dbReference>
<dbReference type="GO" id="GO:0006412">
    <property type="term" value="P:translation"/>
    <property type="evidence" value="ECO:0007669"/>
    <property type="project" value="UniProtKB-UniRule"/>
</dbReference>
<dbReference type="HAMAP" id="MF_00340">
    <property type="entry name" value="Ribosomal_bL32"/>
    <property type="match status" value="1"/>
</dbReference>
<dbReference type="InterPro" id="IPR002677">
    <property type="entry name" value="Ribosomal_bL32"/>
</dbReference>
<dbReference type="Pfam" id="PF01783">
    <property type="entry name" value="Ribosomal_L32p"/>
    <property type="match status" value="1"/>
</dbReference>
<gene>
    <name evidence="1" type="primary">rpmF</name>
    <name evidence="1" type="synonym">rpl32</name>
    <name type="ordered locus">CYA_1135</name>
</gene>
<comment type="similarity">
    <text evidence="1">Belongs to the bacterial ribosomal protein bL32 family.</text>
</comment>
<evidence type="ECO:0000255" key="1">
    <source>
        <dbReference type="HAMAP-Rule" id="MF_00340"/>
    </source>
</evidence>
<evidence type="ECO:0000305" key="2"/>
<organism>
    <name type="scientific">Synechococcus sp. (strain JA-3-3Ab)</name>
    <name type="common">Cyanobacteria bacterium Yellowstone A-Prime</name>
    <dbReference type="NCBI Taxonomy" id="321327"/>
    <lineage>
        <taxon>Bacteria</taxon>
        <taxon>Bacillati</taxon>
        <taxon>Cyanobacteriota</taxon>
        <taxon>Cyanophyceae</taxon>
        <taxon>Synechococcales</taxon>
        <taxon>Synechococcaceae</taxon>
        <taxon>Synechococcus</taxon>
    </lineage>
</organism>
<sequence length="60" mass="6857">MPVPKKKTSKARSRRRYAVWLGKAKLQAQRAMTIGRAILSGRNTGFYYPKAKSEEEEGEE</sequence>
<reference key="1">
    <citation type="journal article" date="2007" name="ISME J.">
        <title>Population level functional diversity in a microbial community revealed by comparative genomic and metagenomic analyses.</title>
        <authorList>
            <person name="Bhaya D."/>
            <person name="Grossman A.R."/>
            <person name="Steunou A.-S."/>
            <person name="Khuri N."/>
            <person name="Cohan F.M."/>
            <person name="Hamamura N."/>
            <person name="Melendrez M.C."/>
            <person name="Bateson M.M."/>
            <person name="Ward D.M."/>
            <person name="Heidelberg J.F."/>
        </authorList>
    </citation>
    <scope>NUCLEOTIDE SEQUENCE [LARGE SCALE GENOMIC DNA]</scope>
    <source>
        <strain>JA-3-3Ab</strain>
    </source>
</reference>
<accession>Q2JVC0</accession>
<name>RL32_SYNJA</name>
<proteinExistence type="inferred from homology"/>
<feature type="chain" id="PRO_0000296586" description="Large ribosomal subunit protein bL32">
    <location>
        <begin position="1"/>
        <end position="60"/>
    </location>
</feature>